<accession>Q6C3Z9</accession>
<name>ACH1_YARLI</name>
<dbReference type="EC" id="3.1.2.1"/>
<dbReference type="EMBL" id="CR382131">
    <property type="protein sequence ID" value="CAG80217.1"/>
    <property type="molecule type" value="Genomic_DNA"/>
</dbReference>
<dbReference type="RefSeq" id="XP_504613.1">
    <property type="nucleotide sequence ID" value="XM_504613.1"/>
</dbReference>
<dbReference type="SMR" id="Q6C3Z9"/>
<dbReference type="FunCoup" id="Q6C3Z9">
    <property type="interactions" value="219"/>
</dbReference>
<dbReference type="STRING" id="284591.Q6C3Z9"/>
<dbReference type="EnsemblFungi" id="CAG80217">
    <property type="protein sequence ID" value="CAG80217"/>
    <property type="gene ID" value="YALI0_E30965g"/>
</dbReference>
<dbReference type="KEGG" id="yli:2911920"/>
<dbReference type="VEuPathDB" id="FungiDB:YALI0_E30965g"/>
<dbReference type="HOGENOM" id="CLU_019748_3_0_1"/>
<dbReference type="InParanoid" id="Q6C3Z9"/>
<dbReference type="OMA" id="SCIVPMV"/>
<dbReference type="OrthoDB" id="71099at4891"/>
<dbReference type="Proteomes" id="UP000001300">
    <property type="component" value="Chromosome E"/>
</dbReference>
<dbReference type="GO" id="GO:0005739">
    <property type="term" value="C:mitochondrion"/>
    <property type="evidence" value="ECO:0000318"/>
    <property type="project" value="GO_Central"/>
</dbReference>
<dbReference type="GO" id="GO:0008775">
    <property type="term" value="F:acetate CoA-transferase activity"/>
    <property type="evidence" value="ECO:0000318"/>
    <property type="project" value="GO_Central"/>
</dbReference>
<dbReference type="GO" id="GO:0003986">
    <property type="term" value="F:acetyl-CoA hydrolase activity"/>
    <property type="evidence" value="ECO:0000318"/>
    <property type="project" value="GO_Central"/>
</dbReference>
<dbReference type="GO" id="GO:0006083">
    <property type="term" value="P:acetate metabolic process"/>
    <property type="evidence" value="ECO:0000318"/>
    <property type="project" value="GO_Central"/>
</dbReference>
<dbReference type="FunFam" id="3.30.750.70:FF:000002">
    <property type="entry name" value="Acetyl-CoA hydrolase Ach1"/>
    <property type="match status" value="1"/>
</dbReference>
<dbReference type="FunFam" id="3.40.1080.20:FF:000001">
    <property type="entry name" value="Acetyl-CoA hydrolase Ach1"/>
    <property type="match status" value="1"/>
</dbReference>
<dbReference type="FunFam" id="3.40.1080.10:FF:000003">
    <property type="entry name" value="Acetyl-coA hydrolase Ach1"/>
    <property type="match status" value="1"/>
</dbReference>
<dbReference type="Gene3D" id="3.30.750.70">
    <property type="entry name" value="4-hydroxybutyrate coenzyme like domains"/>
    <property type="match status" value="1"/>
</dbReference>
<dbReference type="Gene3D" id="3.40.1080.20">
    <property type="entry name" value="Acetyl-CoA hydrolase/transferase C-terminal domain"/>
    <property type="match status" value="1"/>
</dbReference>
<dbReference type="Gene3D" id="3.40.1080.10">
    <property type="entry name" value="Glutaconate Coenzyme A-transferase"/>
    <property type="match status" value="1"/>
</dbReference>
<dbReference type="InterPro" id="IPR026888">
    <property type="entry name" value="AcetylCoA_hyd_C"/>
</dbReference>
<dbReference type="InterPro" id="IPR038460">
    <property type="entry name" value="AcetylCoA_hyd_C_sf"/>
</dbReference>
<dbReference type="InterPro" id="IPR046433">
    <property type="entry name" value="ActCoA_hydro"/>
</dbReference>
<dbReference type="InterPro" id="IPR003702">
    <property type="entry name" value="ActCoA_hydro_N"/>
</dbReference>
<dbReference type="InterPro" id="IPR037171">
    <property type="entry name" value="NagB/RpiA_transferase-like"/>
</dbReference>
<dbReference type="PANTHER" id="PTHR43609">
    <property type="entry name" value="ACETYL-COA HYDROLASE"/>
    <property type="match status" value="1"/>
</dbReference>
<dbReference type="PANTHER" id="PTHR43609:SF1">
    <property type="entry name" value="ACETYL-COA HYDROLASE"/>
    <property type="match status" value="1"/>
</dbReference>
<dbReference type="Pfam" id="PF13336">
    <property type="entry name" value="AcetylCoA_hyd_C"/>
    <property type="match status" value="1"/>
</dbReference>
<dbReference type="Pfam" id="PF02550">
    <property type="entry name" value="AcetylCoA_hydro"/>
    <property type="match status" value="1"/>
</dbReference>
<dbReference type="SUPFAM" id="SSF100950">
    <property type="entry name" value="NagB/RpiA/CoA transferase-like"/>
    <property type="match status" value="2"/>
</dbReference>
<evidence type="ECO:0000250" key="1"/>
<evidence type="ECO:0000250" key="2">
    <source>
        <dbReference type="UniProtKB" id="B3EY95"/>
    </source>
</evidence>
<evidence type="ECO:0000305" key="3"/>
<proteinExistence type="inferred from homology"/>
<feature type="chain" id="PRO_0000215523" description="Acetyl-CoA hydrolase">
    <location>
        <begin position="1"/>
        <end position="524"/>
    </location>
</feature>
<feature type="active site" description="5-glutamyl coenzyme A thioester intermediate" evidence="2">
    <location>
        <position position="304"/>
    </location>
</feature>
<feature type="binding site" evidence="2">
    <location>
        <begin position="279"/>
        <end position="283"/>
    </location>
    <ligand>
        <name>CoA</name>
        <dbReference type="ChEBI" id="CHEBI:57287"/>
    </ligand>
</feature>
<feature type="binding site" evidence="2">
    <location>
        <position position="398"/>
    </location>
    <ligand>
        <name>CoA</name>
        <dbReference type="ChEBI" id="CHEBI:57287"/>
    </ligand>
</feature>
<comment type="function">
    <text evidence="1">Presumably involved in regulating the intracellular acetyl-CoA pool for fatty acid and cholesterol synthesis and fatty acid oxidation.</text>
</comment>
<comment type="catalytic activity">
    <reaction>
        <text>acetyl-CoA + H2O = acetate + CoA + H(+)</text>
        <dbReference type="Rhea" id="RHEA:20289"/>
        <dbReference type="ChEBI" id="CHEBI:15377"/>
        <dbReference type="ChEBI" id="CHEBI:15378"/>
        <dbReference type="ChEBI" id="CHEBI:30089"/>
        <dbReference type="ChEBI" id="CHEBI:57287"/>
        <dbReference type="ChEBI" id="CHEBI:57288"/>
        <dbReference type="EC" id="3.1.2.1"/>
    </reaction>
</comment>
<comment type="subcellular location">
    <subcellularLocation>
        <location evidence="1">Cytoplasm</location>
    </subcellularLocation>
</comment>
<comment type="similarity">
    <text evidence="3">Belongs to the acetyl-CoA hydrolase/transferase family.</text>
</comment>
<keyword id="KW-0963">Cytoplasm</keyword>
<keyword id="KW-0378">Hydrolase</keyword>
<keyword id="KW-1185">Reference proteome</keyword>
<protein>
    <recommendedName>
        <fullName>Acetyl-CoA hydrolase</fullName>
        <ecNumber>3.1.2.1</ecNumber>
    </recommendedName>
    <alternativeName>
        <fullName>Acetyl-CoA deacylase</fullName>
        <shortName>Acetyl-CoA acylase</shortName>
    </alternativeName>
</protein>
<reference key="1">
    <citation type="journal article" date="2004" name="Nature">
        <title>Genome evolution in yeasts.</title>
        <authorList>
            <person name="Dujon B."/>
            <person name="Sherman D."/>
            <person name="Fischer G."/>
            <person name="Durrens P."/>
            <person name="Casaregola S."/>
            <person name="Lafontaine I."/>
            <person name="de Montigny J."/>
            <person name="Marck C."/>
            <person name="Neuveglise C."/>
            <person name="Talla E."/>
            <person name="Goffard N."/>
            <person name="Frangeul L."/>
            <person name="Aigle M."/>
            <person name="Anthouard V."/>
            <person name="Babour A."/>
            <person name="Barbe V."/>
            <person name="Barnay S."/>
            <person name="Blanchin S."/>
            <person name="Beckerich J.-M."/>
            <person name="Beyne E."/>
            <person name="Bleykasten C."/>
            <person name="Boisrame A."/>
            <person name="Boyer J."/>
            <person name="Cattolico L."/>
            <person name="Confanioleri F."/>
            <person name="de Daruvar A."/>
            <person name="Despons L."/>
            <person name="Fabre E."/>
            <person name="Fairhead C."/>
            <person name="Ferry-Dumazet H."/>
            <person name="Groppi A."/>
            <person name="Hantraye F."/>
            <person name="Hennequin C."/>
            <person name="Jauniaux N."/>
            <person name="Joyet P."/>
            <person name="Kachouri R."/>
            <person name="Kerrest A."/>
            <person name="Koszul R."/>
            <person name="Lemaire M."/>
            <person name="Lesur I."/>
            <person name="Ma L."/>
            <person name="Muller H."/>
            <person name="Nicaud J.-M."/>
            <person name="Nikolski M."/>
            <person name="Oztas S."/>
            <person name="Ozier-Kalogeropoulos O."/>
            <person name="Pellenz S."/>
            <person name="Potier S."/>
            <person name="Richard G.-F."/>
            <person name="Straub M.-L."/>
            <person name="Suleau A."/>
            <person name="Swennen D."/>
            <person name="Tekaia F."/>
            <person name="Wesolowski-Louvel M."/>
            <person name="Westhof E."/>
            <person name="Wirth B."/>
            <person name="Zeniou-Meyer M."/>
            <person name="Zivanovic Y."/>
            <person name="Bolotin-Fukuhara M."/>
            <person name="Thierry A."/>
            <person name="Bouchier C."/>
            <person name="Caudron B."/>
            <person name="Scarpelli C."/>
            <person name="Gaillardin C."/>
            <person name="Weissenbach J."/>
            <person name="Wincker P."/>
            <person name="Souciet J.-L."/>
        </authorList>
    </citation>
    <scope>NUCLEOTIDE SEQUENCE [LARGE SCALE GENOMIC DNA]</scope>
    <source>
        <strain>CLIB 122 / E 150</strain>
    </source>
</reference>
<gene>
    <name type="primary">ACH1</name>
    <name type="ordered locus">YALI0E30965g</name>
</gene>
<sequence length="524" mass="58051">MSAVLKQRIRYKPYLDKIRTAAQCVDLFGAKPNQYIGWSGFTGVGAPKVVPDAVSKHVEENNLQGHENWRYNLFVGASAGMEIESRWANNNMIARRSPHQVGKPIAAAINEGRTDFFDKHLSMWAQDLTYGFYTRDKKENSLDIAVIEATAITEDGHLIPGPAVGASPEIVHMADKIIIELNTKTPSFEGLHDINMPVLPPFRQPYQITDVSQKMGTPYIPLDPSKVVAIVESEFADVVGANSPADEGSKAIAANLIELFQQEVKAGRLPENLLPLQSGIGNIANAVVEGLADASFKDLNVWTEVLQDSFLDFFESGNLNFATATSIRLTEDGFKRFFDNWDEFSKKLLLRSQVVSNNPEIIRRLGVIAMNTPVEVDIYAHANSTCVNGSKMLHGLGGSGDFLRNAKLSIMHTPSARPSKTDPLGISCIVPFATHIDQTEHDLDIVVTEQGLADLRGLSPKERSREMINKCAHPSYRDQLLAYVEQAEFECAKSRSLHEPHVLKNAFKMHTNLAENGTMRLDKW</sequence>
<organism>
    <name type="scientific">Yarrowia lipolytica (strain CLIB 122 / E 150)</name>
    <name type="common">Yeast</name>
    <name type="synonym">Candida lipolytica</name>
    <dbReference type="NCBI Taxonomy" id="284591"/>
    <lineage>
        <taxon>Eukaryota</taxon>
        <taxon>Fungi</taxon>
        <taxon>Dikarya</taxon>
        <taxon>Ascomycota</taxon>
        <taxon>Saccharomycotina</taxon>
        <taxon>Dipodascomycetes</taxon>
        <taxon>Dipodascales</taxon>
        <taxon>Dipodascales incertae sedis</taxon>
        <taxon>Yarrowia</taxon>
    </lineage>
</organism>